<evidence type="ECO:0000250" key="1">
    <source>
        <dbReference type="UniProtKB" id="D3ZAA9"/>
    </source>
</evidence>
<evidence type="ECO:0000250" key="2">
    <source>
        <dbReference type="UniProtKB" id="Q9WV34"/>
    </source>
</evidence>
<evidence type="ECO:0000255" key="3">
    <source>
        <dbReference type="PROSITE-ProRule" id="PRU00100"/>
    </source>
</evidence>
<evidence type="ECO:0000255" key="4">
    <source>
        <dbReference type="PROSITE-ProRule" id="PRU00143"/>
    </source>
</evidence>
<evidence type="ECO:0000255" key="5">
    <source>
        <dbReference type="PROSITE-ProRule" id="PRU00192"/>
    </source>
</evidence>
<evidence type="ECO:0000255" key="6">
    <source>
        <dbReference type="PROSITE-ProRule" id="PRU00365"/>
    </source>
</evidence>
<evidence type="ECO:0000269" key="7">
    <source>
    </source>
</evidence>
<evidence type="ECO:0000303" key="8">
    <source>
    </source>
</evidence>
<evidence type="ECO:0000303" key="9">
    <source>
    </source>
</evidence>
<evidence type="ECO:0000303" key="10">
    <source>
    </source>
</evidence>
<evidence type="ECO:0000303" key="11">
    <source>
    </source>
</evidence>
<evidence type="ECO:0000303" key="12">
    <source ref="5"/>
</evidence>
<evidence type="ECO:0000305" key="13"/>
<evidence type="ECO:0000312" key="14">
    <source>
        <dbReference type="HGNC" id="HGNC:7220"/>
    </source>
</evidence>
<evidence type="ECO:0007744" key="15">
    <source>
    </source>
</evidence>
<evidence type="ECO:0007829" key="16">
    <source>
        <dbReference type="PDB" id="2E7K"/>
    </source>
</evidence>
<comment type="function">
    <text evidence="1 2 7">Postsynaptic MAGUK scaffold protein that links CADM1 cell adhesion molecules to core components of the postsynaptic density (By similarity). In CA1 pyramidal neurons, required for synaptic KCNN2-containing channel function and long-term potentiation expression (By similarity). Seems to negatively regulate SRC function in epithelial cells (PubMed:19665017).</text>
</comment>
<comment type="subunit">
    <text evidence="1 2 7">Can homomultimerise. Interacts with CACNG2. Interacts (via the SH3-Guanylate kinase-like sub-module) with DLG4/PSD95 and DLGAP1/GKAP. Interacts (via the PDZ domain) with CADM1 (via C-terminus) (By similarity). Interacts with KCNN2/SK2 (via N-terminal domain) (By similarity). Interacts with SRC (PubMed:19665017).</text>
</comment>
<comment type="interaction">
    <interactant intactId="EBI-10181752">
        <id>Q14168-2</id>
    </interactant>
    <interactant intactId="EBI-2513988">
        <id>O14910</id>
        <label>LIN7A</label>
    </interactant>
    <organismsDiffer>false</organismsDiffer>
    <experiments>4</experiments>
</comment>
<comment type="interaction">
    <interactant intactId="EBI-14385193">
        <id>Q14168-4</id>
    </interactant>
    <interactant intactId="EBI-2513988">
        <id>O14910</id>
        <label>LIN7A</label>
    </interactant>
    <organismsDiffer>false</organismsDiffer>
    <experiments>7</experiments>
</comment>
<comment type="interaction">
    <interactant intactId="EBI-14385193">
        <id>Q14168-4</id>
    </interactant>
    <interactant intactId="EBI-821335">
        <id>Q9HAP6</id>
        <label>LIN7B</label>
    </interactant>
    <organismsDiffer>false</organismsDiffer>
    <experiments>3</experiments>
</comment>
<comment type="interaction">
    <interactant intactId="EBI-14385193">
        <id>Q14168-4</id>
    </interactant>
    <interactant intactId="EBI-1171517">
        <id>Q9NUP9</id>
        <label>LIN7C</label>
    </interactant>
    <organismsDiffer>false</organismsDiffer>
    <experiments>7</experiments>
</comment>
<comment type="subcellular location">
    <subcellularLocation>
        <location evidence="7">Cytoplasm</location>
        <location evidence="7">Cytoskeleton</location>
    </subcellularLocation>
    <subcellularLocation>
        <location evidence="7">Membrane</location>
    </subcellularLocation>
    <subcellularLocation>
        <location evidence="2">Cell projection</location>
        <location evidence="2">Dendrite</location>
    </subcellularLocation>
    <subcellularLocation>
        <location evidence="2">Postsynaptic density</location>
    </subcellularLocation>
    <text evidence="2">Prominently expressed in the postsynaptic densities of dendritic spines, is also detected in dendritic shafts.</text>
</comment>
<comment type="alternative products">
    <event type="alternative splicing"/>
    <isoform>
        <id>Q14168-1</id>
        <name>1</name>
        <sequence type="displayed"/>
    </isoform>
    <isoform>
        <id>Q14168-2</id>
        <name>2</name>
        <sequence type="described" ref="VSP_003156"/>
    </isoform>
    <isoform>
        <id>Q14168-3</id>
        <name>3</name>
        <sequence type="described" ref="VSP_022951 VSP_003156"/>
    </isoform>
    <isoform>
        <id>Q14168-4</id>
        <name>4</name>
        <sequence type="described" ref="VSP_055138 VSP_003156"/>
    </isoform>
    <isoform>
        <id>Q14168-5</id>
        <name>5</name>
        <sequence type="described" ref="VSP_055136"/>
    </isoform>
    <isoform>
        <id>Q14168-6</id>
        <name>6</name>
        <sequence type="described" ref="VSP_055137 VSP_003156"/>
    </isoform>
</comment>
<comment type="PTM">
    <text evidence="7">Phosphorylated by SRC.</text>
</comment>
<comment type="similarity">
    <text evidence="13">Belongs to the MAGUK family.</text>
</comment>
<accession>Q14168</accession>
<accession>B4DGE9</accession>
<accession>B4DRJ0</accession>
<accession>B7Z3G8</accession>
<accession>E7EV80</accession>
<accession>E7EV91</accession>
<accession>E7EX01</accession>
<accession>Q53ES9</accession>
<accession>Q5CZB9</accession>
<accession>Q9BQJ2</accession>
<name>MPP2_HUMAN</name>
<organism>
    <name type="scientific">Homo sapiens</name>
    <name type="common">Human</name>
    <dbReference type="NCBI Taxonomy" id="9606"/>
    <lineage>
        <taxon>Eukaryota</taxon>
        <taxon>Metazoa</taxon>
        <taxon>Chordata</taxon>
        <taxon>Craniata</taxon>
        <taxon>Vertebrata</taxon>
        <taxon>Euteleostomi</taxon>
        <taxon>Mammalia</taxon>
        <taxon>Eutheria</taxon>
        <taxon>Euarchontoglires</taxon>
        <taxon>Primates</taxon>
        <taxon>Haplorrhini</taxon>
        <taxon>Catarrhini</taxon>
        <taxon>Hominidae</taxon>
        <taxon>Homo</taxon>
    </lineage>
</organism>
<keyword id="KW-0002">3D-structure</keyword>
<keyword id="KW-0025">Alternative splicing</keyword>
<keyword id="KW-0966">Cell projection</keyword>
<keyword id="KW-0963">Cytoplasm</keyword>
<keyword id="KW-0206">Cytoskeleton</keyword>
<keyword id="KW-0472">Membrane</keyword>
<keyword id="KW-0597">Phosphoprotein</keyword>
<keyword id="KW-1267">Proteomics identification</keyword>
<keyword id="KW-1185">Reference proteome</keyword>
<keyword id="KW-0677">Repeat</keyword>
<keyword id="KW-0728">SH3 domain</keyword>
<keyword id="KW-0770">Synapse</keyword>
<gene>
    <name evidence="14" type="primary">MPP2</name>
    <name type="synonym">DLG2</name>
</gene>
<sequence length="576" mass="64581">MPVAATNSETAMQQVLDNLGSLPSATGAAELDLIFLRGIMESPIVRSLAKVIMVLWFMQQNVFVPMKYMLKYFGAHERLEETKLEAVRDNNLELVQEILRDLAHVAEQSSTAAELAHILQEPHFQSLLETHDSVASKTYETPPPSPGLDPTFSNQPVPPDAVRMVGIRKTAGEHLGVTFRVEGGELVIARILHGGMVAQQGLLHVGDIIKEVNGQPVGSDPRALQELLRNASGSVILKILPSYQEPHLPRQVFVKCHFDYDPARDSLIPCKEAGLRFNAGDLLQIVNQDDANWWQACHVEGGSAGLIPSQLLEEKRKAFVKRDLELTPNSGTLCGSLSGKKKKRMMYLTTKNAEFDRHELLIYEEVARMPPFRRKTLVLIGAQGVGRRSLKNKLIMWDPDRYGTTVPYTSRRPKDSEREGQGYSFVSRGEMEADVRAGRYLEHGEYEGNLYGTRIDSIRGVVAAGKVCVLDVNPQAVKVLRTAEFVPYVVFIEAPDFETLRAMNRAALESGISTKQLTEADLRRTVEESSRIQRGYGHYFDLCLVNSNLERTFRELQTAMEKLRTEPQWVPVSWVY</sequence>
<feature type="chain" id="PRO_0000094573" description="MAGUK p55 subfamily member 2">
    <location>
        <begin position="1"/>
        <end position="576"/>
    </location>
</feature>
<feature type="domain" description="L27 1" evidence="6">
    <location>
        <begin position="8"/>
        <end position="60"/>
    </location>
</feature>
<feature type="domain" description="L27 2" evidence="6">
    <location>
        <begin position="84"/>
        <end position="142"/>
    </location>
</feature>
<feature type="domain" description="PDZ" evidence="4">
    <location>
        <begin position="185"/>
        <end position="240"/>
    </location>
</feature>
<feature type="domain" description="SH3" evidence="5">
    <location>
        <begin position="249"/>
        <end position="317"/>
    </location>
</feature>
<feature type="domain" description="Guanylate kinase-like" evidence="3">
    <location>
        <begin position="374"/>
        <end position="561"/>
    </location>
</feature>
<feature type="modified residue" description="Phosphoserine" evidence="1">
    <location>
        <position position="42"/>
    </location>
</feature>
<feature type="modified residue" description="Phosphothreonine" evidence="15">
    <location>
        <position position="141"/>
    </location>
</feature>
<feature type="modified residue" description="Phosphoserine" evidence="2">
    <location>
        <position position="145"/>
    </location>
</feature>
<feature type="splice variant" id="VSP_055136" description="In isoform 5." evidence="9">
    <location>
        <begin position="1"/>
        <end position="163"/>
    </location>
</feature>
<feature type="splice variant" id="VSP_055137" description="In isoform 6." evidence="9">
    <location>
        <begin position="1"/>
        <end position="11"/>
    </location>
</feature>
<feature type="splice variant" id="VSP_022951" description="In isoform 3." evidence="11">
    <original>MPVAATNSET</original>
    <variation>MAGSPGSGVSLEGISLESSEEAELQRE</variation>
    <location>
        <begin position="1"/>
        <end position="10"/>
    </location>
</feature>
<feature type="splice variant" id="VSP_055138" description="In isoform 4." evidence="9">
    <original>M</original>
    <variation>MSWAPPPQVGQNLRSQTVLRILNGMEDLMWVAMEERRFRALASFTM</variation>
    <location>
        <position position="1"/>
    </location>
</feature>
<feature type="splice variant" id="VSP_003156" description="In isoform 2, isoform 3, isoform 4 and isoform 6." evidence="8 9 10 11 12">
    <location>
        <begin position="51"/>
        <end position="74"/>
    </location>
</feature>
<feature type="mutagenesis site" description="Enhances association with the cytoskeleton. Diminishes the inhibitory effect on SRC." evidence="7">
    <original>Y</original>
    <variation>A</variation>
    <location>
        <position position="363"/>
    </location>
</feature>
<feature type="mutagenesis site" description="Enhances association with the cytoskeleton." evidence="7">
    <original>Y</original>
    <variation>D</variation>
    <location>
        <position position="363"/>
    </location>
</feature>
<feature type="sequence conflict" description="In Ref. 4; CAI56746." evidence="13" ref="4">
    <original>E</original>
    <variation>G</variation>
    <location>
        <position position="80"/>
    </location>
</feature>
<feature type="sequence conflict" description="In Ref. 1; CAA58067, 2; BAD97280, 5; CAB66489, 4; CAI56746, 7; AAH30287 and 3; BAG61302/BAH12204." evidence="13" ref="1 2 5 4 7 3">
    <original>HV</original>
    <variation>QL</variation>
    <location>
        <begin position="104"/>
        <end position="105"/>
    </location>
</feature>
<feature type="sequence conflict" description="In Ref. 1; CAA58067." evidence="13" ref="1">
    <original>S</original>
    <variation>N</variation>
    <location>
        <position position="242"/>
    </location>
</feature>
<feature type="sequence conflict" description="In Ref. 3; BAG57760." evidence="13" ref="3">
    <original>R</original>
    <variation>C</variation>
    <location>
        <position position="531"/>
    </location>
</feature>
<feature type="sequence conflict" description="In Ref. 3; BAG61302." evidence="13" ref="3">
    <original>R</original>
    <variation>C</variation>
    <location>
        <position position="554"/>
    </location>
</feature>
<feature type="strand" evidence="16">
    <location>
        <begin position="177"/>
        <end position="191"/>
    </location>
</feature>
<feature type="strand" evidence="16">
    <location>
        <begin position="193"/>
        <end position="195"/>
    </location>
</feature>
<feature type="helix" evidence="16">
    <location>
        <begin position="196"/>
        <end position="200"/>
    </location>
</feature>
<feature type="strand" evidence="16">
    <location>
        <begin position="208"/>
        <end position="212"/>
    </location>
</feature>
<feature type="helix" evidence="16">
    <location>
        <begin position="221"/>
        <end position="229"/>
    </location>
</feature>
<feature type="strand" evidence="16">
    <location>
        <begin position="233"/>
        <end position="235"/>
    </location>
</feature>
<feature type="strand" evidence="16">
    <location>
        <begin position="237"/>
        <end position="240"/>
    </location>
</feature>
<proteinExistence type="evidence at protein level"/>
<reference key="1">
    <citation type="journal article" date="1995" name="Genomics">
        <title>A gene (DLG2) located at 17q12-q21 encodes a new homologue of the Drosophila tumor suppressor dlg-A.</title>
        <authorList>
            <person name="Mazoyer S."/>
            <person name="Gayther S.A."/>
            <person name="Nagai M.A."/>
            <person name="Smith S.A."/>
            <person name="Dunning A."/>
            <person name="van Rensburg E.J."/>
            <person name="Albertsen H."/>
            <person name="White R."/>
            <person name="Ponder B.A.J."/>
        </authorList>
    </citation>
    <scope>NUCLEOTIDE SEQUENCE [MRNA] (ISOFORM 1)</scope>
    <source>
        <tissue>Brain</tissue>
    </source>
</reference>
<reference key="2">
    <citation type="journal article" date="2001" name="Genome Res.">
        <title>Towards a catalog of human genes and proteins: sequencing and analysis of 500 novel complete protein coding human cDNAs.</title>
        <authorList>
            <person name="Wiemann S."/>
            <person name="Weil B."/>
            <person name="Wellenreuther R."/>
            <person name="Gassenhuber J."/>
            <person name="Glassl S."/>
            <person name="Ansorge W."/>
            <person name="Boecher M."/>
            <person name="Bloecker H."/>
            <person name="Bauersachs S."/>
            <person name="Blum H."/>
            <person name="Lauber J."/>
            <person name="Duesterhoeft A."/>
            <person name="Beyer A."/>
            <person name="Koehrer K."/>
            <person name="Strack N."/>
            <person name="Mewes H.-W."/>
            <person name="Ottenwaelder B."/>
            <person name="Obermaier B."/>
            <person name="Tampe J."/>
            <person name="Heubner D."/>
            <person name="Wambutt R."/>
            <person name="Korn B."/>
            <person name="Klein M."/>
            <person name="Poustka A."/>
        </authorList>
    </citation>
    <scope>NUCLEOTIDE SEQUENCE [LARGE SCALE MRNA] (ISOFORM 2)</scope>
    <source>
        <tissue>Amygdala</tissue>
    </source>
</reference>
<reference key="3">
    <citation type="journal article" date="2004" name="Nat. Genet.">
        <title>Complete sequencing and characterization of 21,243 full-length human cDNAs.</title>
        <authorList>
            <person name="Ota T."/>
            <person name="Suzuki Y."/>
            <person name="Nishikawa T."/>
            <person name="Otsuki T."/>
            <person name="Sugiyama T."/>
            <person name="Irie R."/>
            <person name="Wakamatsu A."/>
            <person name="Hayashi K."/>
            <person name="Sato H."/>
            <person name="Nagai K."/>
            <person name="Kimura K."/>
            <person name="Makita H."/>
            <person name="Sekine M."/>
            <person name="Obayashi M."/>
            <person name="Nishi T."/>
            <person name="Shibahara T."/>
            <person name="Tanaka T."/>
            <person name="Ishii S."/>
            <person name="Yamamoto J."/>
            <person name="Saito K."/>
            <person name="Kawai Y."/>
            <person name="Isono Y."/>
            <person name="Nakamura Y."/>
            <person name="Nagahari K."/>
            <person name="Murakami K."/>
            <person name="Yasuda T."/>
            <person name="Iwayanagi T."/>
            <person name="Wagatsuma M."/>
            <person name="Shiratori A."/>
            <person name="Sudo H."/>
            <person name="Hosoiri T."/>
            <person name="Kaku Y."/>
            <person name="Kodaira H."/>
            <person name="Kondo H."/>
            <person name="Sugawara M."/>
            <person name="Takahashi M."/>
            <person name="Kanda K."/>
            <person name="Yokoi T."/>
            <person name="Furuya T."/>
            <person name="Kikkawa E."/>
            <person name="Omura Y."/>
            <person name="Abe K."/>
            <person name="Kamihara K."/>
            <person name="Katsuta N."/>
            <person name="Sato K."/>
            <person name="Tanikawa M."/>
            <person name="Yamazaki M."/>
            <person name="Ninomiya K."/>
            <person name="Ishibashi T."/>
            <person name="Yamashita H."/>
            <person name="Murakawa K."/>
            <person name="Fujimori K."/>
            <person name="Tanai H."/>
            <person name="Kimata M."/>
            <person name="Watanabe M."/>
            <person name="Hiraoka S."/>
            <person name="Chiba Y."/>
            <person name="Ishida S."/>
            <person name="Ono Y."/>
            <person name="Takiguchi S."/>
            <person name="Watanabe S."/>
            <person name="Yosida M."/>
            <person name="Hotuta T."/>
            <person name="Kusano J."/>
            <person name="Kanehori K."/>
            <person name="Takahashi-Fujii A."/>
            <person name="Hara H."/>
            <person name="Tanase T.-O."/>
            <person name="Nomura Y."/>
            <person name="Togiya S."/>
            <person name="Komai F."/>
            <person name="Hara R."/>
            <person name="Takeuchi K."/>
            <person name="Arita M."/>
            <person name="Imose N."/>
            <person name="Musashino K."/>
            <person name="Yuuki H."/>
            <person name="Oshima A."/>
            <person name="Sasaki N."/>
            <person name="Aotsuka S."/>
            <person name="Yoshikawa Y."/>
            <person name="Matsunawa H."/>
            <person name="Ichihara T."/>
            <person name="Shiohata N."/>
            <person name="Sano S."/>
            <person name="Moriya S."/>
            <person name="Momiyama H."/>
            <person name="Satoh N."/>
            <person name="Takami S."/>
            <person name="Terashima Y."/>
            <person name="Suzuki O."/>
            <person name="Nakagawa S."/>
            <person name="Senoh A."/>
            <person name="Mizoguchi H."/>
            <person name="Goto Y."/>
            <person name="Shimizu F."/>
            <person name="Wakebe H."/>
            <person name="Hishigaki H."/>
            <person name="Watanabe T."/>
            <person name="Sugiyama A."/>
            <person name="Takemoto M."/>
            <person name="Kawakami B."/>
            <person name="Yamazaki M."/>
            <person name="Watanabe K."/>
            <person name="Kumagai A."/>
            <person name="Itakura S."/>
            <person name="Fukuzumi Y."/>
            <person name="Fujimori Y."/>
            <person name="Komiyama M."/>
            <person name="Tashiro H."/>
            <person name="Tanigami A."/>
            <person name="Fujiwara T."/>
            <person name="Ono T."/>
            <person name="Yamada K."/>
            <person name="Fujii Y."/>
            <person name="Ozaki K."/>
            <person name="Hirao M."/>
            <person name="Ohmori Y."/>
            <person name="Kawabata A."/>
            <person name="Hikiji T."/>
            <person name="Kobatake N."/>
            <person name="Inagaki H."/>
            <person name="Ikema Y."/>
            <person name="Okamoto S."/>
            <person name="Okitani R."/>
            <person name="Kawakami T."/>
            <person name="Noguchi S."/>
            <person name="Itoh T."/>
            <person name="Shigeta K."/>
            <person name="Senba T."/>
            <person name="Matsumura K."/>
            <person name="Nakajima Y."/>
            <person name="Mizuno T."/>
            <person name="Morinaga M."/>
            <person name="Sasaki M."/>
            <person name="Togashi T."/>
            <person name="Oyama M."/>
            <person name="Hata H."/>
            <person name="Watanabe M."/>
            <person name="Komatsu T."/>
            <person name="Mizushima-Sugano J."/>
            <person name="Satoh T."/>
            <person name="Shirai Y."/>
            <person name="Takahashi Y."/>
            <person name="Nakagawa K."/>
            <person name="Okumura K."/>
            <person name="Nagase T."/>
            <person name="Nomura N."/>
            <person name="Kikuchi H."/>
            <person name="Masuho Y."/>
            <person name="Yamashita R."/>
            <person name="Nakai K."/>
            <person name="Yada T."/>
            <person name="Nakamura Y."/>
            <person name="Ohara O."/>
            <person name="Isogai T."/>
            <person name="Sugano S."/>
        </authorList>
    </citation>
    <scope>NUCLEOTIDE SEQUENCE [LARGE SCALE MRNA] (ISOFORMS 4; 5 AND 6)</scope>
    <source>
        <tissue>Amygdala</tissue>
        <tissue>Hippocampus</tissue>
    </source>
</reference>
<reference key="4">
    <citation type="journal article" date="2007" name="BMC Genomics">
        <title>The full-ORF clone resource of the German cDNA consortium.</title>
        <authorList>
            <person name="Bechtel S."/>
            <person name="Rosenfelder H."/>
            <person name="Duda A."/>
            <person name="Schmidt C.P."/>
            <person name="Ernst U."/>
            <person name="Wellenreuther R."/>
            <person name="Mehrle A."/>
            <person name="Schuster C."/>
            <person name="Bahr A."/>
            <person name="Bloecker H."/>
            <person name="Heubner D."/>
            <person name="Hoerlein A."/>
            <person name="Michel G."/>
            <person name="Wedler H."/>
            <person name="Koehrer K."/>
            <person name="Ottenwaelder B."/>
            <person name="Poustka A."/>
            <person name="Wiemann S."/>
            <person name="Schupp I."/>
        </authorList>
    </citation>
    <scope>NUCLEOTIDE SEQUENCE [LARGE SCALE MRNA] (ISOFORM 3)</scope>
    <source>
        <tissue>Salivary gland</tissue>
    </source>
</reference>
<reference key="5">
    <citation type="submission" date="2005-04" db="EMBL/GenBank/DDBJ databases">
        <authorList>
            <person name="Totoki Y."/>
            <person name="Toyoda A."/>
            <person name="Takeda T."/>
            <person name="Sakaki Y."/>
            <person name="Tanaka A."/>
            <person name="Yokoyama S."/>
        </authorList>
    </citation>
    <scope>NUCLEOTIDE SEQUENCE [LARGE SCALE MRNA] (ISOFORM 2)</scope>
    <source>
        <tissue>Brain</tissue>
    </source>
</reference>
<reference key="6">
    <citation type="journal article" date="2006" name="Nature">
        <title>DNA sequence of human chromosome 17 and analysis of rearrangement in the human lineage.</title>
        <authorList>
            <person name="Zody M.C."/>
            <person name="Garber M."/>
            <person name="Adams D.J."/>
            <person name="Sharpe T."/>
            <person name="Harrow J."/>
            <person name="Lupski J.R."/>
            <person name="Nicholson C."/>
            <person name="Searle S.M."/>
            <person name="Wilming L."/>
            <person name="Young S.K."/>
            <person name="Abouelleil A."/>
            <person name="Allen N.R."/>
            <person name="Bi W."/>
            <person name="Bloom T."/>
            <person name="Borowsky M.L."/>
            <person name="Bugalter B.E."/>
            <person name="Butler J."/>
            <person name="Chang J.L."/>
            <person name="Chen C.-K."/>
            <person name="Cook A."/>
            <person name="Corum B."/>
            <person name="Cuomo C.A."/>
            <person name="de Jong P.J."/>
            <person name="DeCaprio D."/>
            <person name="Dewar K."/>
            <person name="FitzGerald M."/>
            <person name="Gilbert J."/>
            <person name="Gibson R."/>
            <person name="Gnerre S."/>
            <person name="Goldstein S."/>
            <person name="Grafham D.V."/>
            <person name="Grocock R."/>
            <person name="Hafez N."/>
            <person name="Hagopian D.S."/>
            <person name="Hart E."/>
            <person name="Norman C.H."/>
            <person name="Humphray S."/>
            <person name="Jaffe D.B."/>
            <person name="Jones M."/>
            <person name="Kamal M."/>
            <person name="Khodiyar V.K."/>
            <person name="LaButti K."/>
            <person name="Laird G."/>
            <person name="Lehoczky J."/>
            <person name="Liu X."/>
            <person name="Lokyitsang T."/>
            <person name="Loveland J."/>
            <person name="Lui A."/>
            <person name="Macdonald P."/>
            <person name="Major J.E."/>
            <person name="Matthews L."/>
            <person name="Mauceli E."/>
            <person name="McCarroll S.A."/>
            <person name="Mihalev A.H."/>
            <person name="Mudge J."/>
            <person name="Nguyen C."/>
            <person name="Nicol R."/>
            <person name="O'Leary S.B."/>
            <person name="Osoegawa K."/>
            <person name="Schwartz D.C."/>
            <person name="Shaw-Smith C."/>
            <person name="Stankiewicz P."/>
            <person name="Steward C."/>
            <person name="Swarbreck D."/>
            <person name="Venkataraman V."/>
            <person name="Whittaker C.A."/>
            <person name="Yang X."/>
            <person name="Zimmer A.R."/>
            <person name="Bradley A."/>
            <person name="Hubbard T."/>
            <person name="Birren B.W."/>
            <person name="Rogers J."/>
            <person name="Lander E.S."/>
            <person name="Nusbaum C."/>
        </authorList>
    </citation>
    <scope>NUCLEOTIDE SEQUENCE [LARGE SCALE GENOMIC DNA]</scope>
</reference>
<reference key="7">
    <citation type="journal article" date="2004" name="Genome Res.">
        <title>The status, quality, and expansion of the NIH full-length cDNA project: the Mammalian Gene Collection (MGC).</title>
        <authorList>
            <consortium name="The MGC Project Team"/>
        </authorList>
    </citation>
    <scope>NUCLEOTIDE SEQUENCE [LARGE SCALE MRNA] (ISOFORM 2)</scope>
    <source>
        <tissue>Brain</tissue>
    </source>
</reference>
<reference key="8">
    <citation type="journal article" date="2009" name="Anal. Chem.">
        <title>Lys-N and trypsin cover complementary parts of the phosphoproteome in a refined SCX-based approach.</title>
        <authorList>
            <person name="Gauci S."/>
            <person name="Helbig A.O."/>
            <person name="Slijper M."/>
            <person name="Krijgsveld J."/>
            <person name="Heck A.J."/>
            <person name="Mohammed S."/>
        </authorList>
    </citation>
    <scope>IDENTIFICATION BY MASS SPECTROMETRY [LARGE SCALE ANALYSIS]</scope>
</reference>
<reference key="9">
    <citation type="journal article" date="2009" name="Exp. Cell Res.">
        <title>The PDZ protein MPP2 interacts with c-Src in epithelial cells.</title>
        <authorList>
            <person name="Baumgartner M."/>
            <person name="Weiss A."/>
            <person name="Fritzius T."/>
            <person name="Heinrich J."/>
            <person name="Moelling K."/>
        </authorList>
    </citation>
    <scope>FUNCTION</scope>
    <scope>INTERACTION WITH SRC</scope>
    <scope>SUBCELLULAR LOCATION</scope>
    <scope>MUTAGENESIS OF TYR-363</scope>
    <scope>PHOSPHORYLATION</scope>
</reference>
<reference key="10">
    <citation type="journal article" date="2009" name="Sci. Signal.">
        <title>Quantitative phosphoproteomic analysis of T cell receptor signaling reveals system-wide modulation of protein-protein interactions.</title>
        <authorList>
            <person name="Mayya V."/>
            <person name="Lundgren D.H."/>
            <person name="Hwang S.-I."/>
            <person name="Rezaul K."/>
            <person name="Wu L."/>
            <person name="Eng J.K."/>
            <person name="Rodionov V."/>
            <person name="Han D.K."/>
        </authorList>
    </citation>
    <scope>PHOSPHORYLATION [LARGE SCALE ANALYSIS] AT THR-141</scope>
    <scope>IDENTIFICATION BY MASS SPECTROMETRY [LARGE SCALE ANALYSIS]</scope>
    <source>
        <tissue>Leukemic T-cell</tissue>
    </source>
</reference>
<reference key="11">
    <citation type="journal article" date="2011" name="BMC Syst. Biol.">
        <title>Initial characterization of the human central proteome.</title>
        <authorList>
            <person name="Burkard T.R."/>
            <person name="Planyavsky M."/>
            <person name="Kaupe I."/>
            <person name="Breitwieser F.P."/>
            <person name="Buerckstuemmer T."/>
            <person name="Bennett K.L."/>
            <person name="Superti-Furga G."/>
            <person name="Colinge J."/>
        </authorList>
    </citation>
    <scope>IDENTIFICATION BY MASS SPECTROMETRY [LARGE SCALE ANALYSIS]</scope>
</reference>
<reference key="12">
    <citation type="submission" date="2008-01" db="PDB data bank">
        <title>Solution structure of the PDZ domain from human maguk p55 subfamily member 2.</title>
        <authorList>
            <consortium name="RIKEN structural genomics initiative (RSGI)"/>
        </authorList>
    </citation>
    <scope>STRUCTURE BY NMR OF 163-240</scope>
</reference>
<dbReference type="EMBL" id="X82895">
    <property type="protein sequence ID" value="CAA58067.1"/>
    <property type="molecule type" value="mRNA"/>
</dbReference>
<dbReference type="EMBL" id="AL136554">
    <property type="protein sequence ID" value="CAB66489.1"/>
    <property type="molecule type" value="mRNA"/>
</dbReference>
<dbReference type="EMBL" id="AK294564">
    <property type="protein sequence ID" value="BAG57760.1"/>
    <property type="molecule type" value="mRNA"/>
</dbReference>
<dbReference type="EMBL" id="AK295858">
    <property type="protein sequence ID" value="BAH12204.1"/>
    <property type="molecule type" value="mRNA"/>
</dbReference>
<dbReference type="EMBL" id="AK299286">
    <property type="protein sequence ID" value="BAG61302.1"/>
    <property type="molecule type" value="mRNA"/>
</dbReference>
<dbReference type="EMBL" id="CR936598">
    <property type="protein sequence ID" value="CAI56746.1"/>
    <property type="molecule type" value="mRNA"/>
</dbReference>
<dbReference type="EMBL" id="AK223560">
    <property type="protein sequence ID" value="BAD97280.1"/>
    <property type="molecule type" value="mRNA"/>
</dbReference>
<dbReference type="EMBL" id="AC007993">
    <property type="status" value="NOT_ANNOTATED_CDS"/>
    <property type="molecule type" value="Genomic_DNA"/>
</dbReference>
<dbReference type="EMBL" id="BC030287">
    <property type="protein sequence ID" value="AAH30287.1"/>
    <property type="molecule type" value="mRNA"/>
</dbReference>
<dbReference type="CCDS" id="CCDS11471.1">
    <molecule id="Q14168-2"/>
</dbReference>
<dbReference type="CCDS" id="CCDS62206.1">
    <molecule id="Q14168-5"/>
</dbReference>
<dbReference type="CCDS" id="CCDS62207.1">
    <molecule id="Q14168-6"/>
</dbReference>
<dbReference type="CCDS" id="CCDS62208.1">
    <molecule id="Q14168-3"/>
</dbReference>
<dbReference type="CCDS" id="CCDS62209.1">
    <molecule id="Q14168-1"/>
</dbReference>
<dbReference type="CCDS" id="CCDS62210.1">
    <molecule id="Q14168-4"/>
</dbReference>
<dbReference type="PIR" id="A57653">
    <property type="entry name" value="A57653"/>
</dbReference>
<dbReference type="RefSeq" id="NP_001265299.1">
    <property type="nucleotide sequence ID" value="NM_001278370.1"/>
</dbReference>
<dbReference type="RefSeq" id="NP_001265300.1">
    <property type="nucleotide sequence ID" value="NM_001278371.1"/>
</dbReference>
<dbReference type="RefSeq" id="NP_001265301.1">
    <property type="nucleotide sequence ID" value="NM_001278372.1"/>
</dbReference>
<dbReference type="RefSeq" id="NP_001265302.1">
    <property type="nucleotide sequence ID" value="NM_001278373.1"/>
</dbReference>
<dbReference type="RefSeq" id="NP_001265303.1">
    <molecule id="Q14168-5"/>
    <property type="nucleotide sequence ID" value="NM_001278374.2"/>
</dbReference>
<dbReference type="RefSeq" id="NP_001265304.1">
    <property type="nucleotide sequence ID" value="NM_001278375.1"/>
</dbReference>
<dbReference type="RefSeq" id="NP_001265305.2">
    <property type="nucleotide sequence ID" value="NM_001278376.2"/>
</dbReference>
<dbReference type="RefSeq" id="NP_001265310.1">
    <property type="nucleotide sequence ID" value="NM_001278381.1"/>
</dbReference>
<dbReference type="RefSeq" id="NP_005365.4">
    <property type="nucleotide sequence ID" value="NM_005374.4"/>
</dbReference>
<dbReference type="PDB" id="2E7K">
    <property type="method" value="NMR"/>
    <property type="chains" value="A=163-240"/>
</dbReference>
<dbReference type="PDBsum" id="2E7K"/>
<dbReference type="BMRB" id="Q14168"/>
<dbReference type="SMR" id="Q14168"/>
<dbReference type="BioGRID" id="110495">
    <property type="interactions" value="43"/>
</dbReference>
<dbReference type="FunCoup" id="Q14168">
    <property type="interactions" value="397"/>
</dbReference>
<dbReference type="IntAct" id="Q14168">
    <property type="interactions" value="40"/>
</dbReference>
<dbReference type="MINT" id="Q14168"/>
<dbReference type="STRING" id="9606.ENSP00000428182"/>
<dbReference type="iPTMnet" id="Q14168"/>
<dbReference type="PhosphoSitePlus" id="Q14168"/>
<dbReference type="SwissPalm" id="Q14168"/>
<dbReference type="BioMuta" id="MPP2"/>
<dbReference type="DMDM" id="290457681"/>
<dbReference type="jPOST" id="Q14168"/>
<dbReference type="MassIVE" id="Q14168"/>
<dbReference type="PaxDb" id="9606-ENSP00000428182"/>
<dbReference type="PeptideAtlas" id="Q14168"/>
<dbReference type="ProteomicsDB" id="18580"/>
<dbReference type="ProteomicsDB" id="18587"/>
<dbReference type="ProteomicsDB" id="18952"/>
<dbReference type="ProteomicsDB" id="59895">
    <molecule id="Q14168-1"/>
</dbReference>
<dbReference type="ProteomicsDB" id="59896">
    <molecule id="Q14168-2"/>
</dbReference>
<dbReference type="ProteomicsDB" id="59897">
    <molecule id="Q14168-3"/>
</dbReference>
<dbReference type="Pumba" id="Q14168"/>
<dbReference type="TopDownProteomics" id="Q14168-2">
    <molecule id="Q14168-2"/>
</dbReference>
<dbReference type="Antibodypedia" id="17305">
    <property type="antibodies" value="221 antibodies from 26 providers"/>
</dbReference>
<dbReference type="DNASU" id="4355"/>
<dbReference type="Ensembl" id="ENST00000520305.5">
    <molecule id="Q14168-5"/>
    <property type="protein sequence ID" value="ENSP00000428136.1"/>
    <property type="gene ID" value="ENSG00000108852.16"/>
</dbReference>
<dbReference type="GeneID" id="4355"/>
<dbReference type="KEGG" id="hsa:4355"/>
<dbReference type="UCSC" id="uc010win.3">
    <molecule id="Q14168-1"/>
    <property type="organism name" value="human"/>
</dbReference>
<dbReference type="AGR" id="HGNC:7220"/>
<dbReference type="CTD" id="4355"/>
<dbReference type="DisGeNET" id="4355"/>
<dbReference type="GeneCards" id="MPP2"/>
<dbReference type="HGNC" id="HGNC:7220">
    <property type="gene designation" value="MPP2"/>
</dbReference>
<dbReference type="HPA" id="ENSG00000108852">
    <property type="expression patterns" value="Tissue enhanced (brain)"/>
</dbReference>
<dbReference type="MIM" id="600723">
    <property type="type" value="gene"/>
</dbReference>
<dbReference type="neXtProt" id="NX_Q14168"/>
<dbReference type="OpenTargets" id="ENSG00000108852"/>
<dbReference type="PharmGKB" id="PA30925"/>
<dbReference type="VEuPathDB" id="HostDB:ENSG00000108852"/>
<dbReference type="eggNOG" id="KOG0609">
    <property type="taxonomic scope" value="Eukaryota"/>
</dbReference>
<dbReference type="GeneTree" id="ENSGT00940000155348"/>
<dbReference type="HOGENOM" id="CLU_001715_5_1_1"/>
<dbReference type="InParanoid" id="Q14168"/>
<dbReference type="OrthoDB" id="65789at2759"/>
<dbReference type="PAN-GO" id="Q14168">
    <property type="GO annotations" value="2 GO annotations based on evolutionary models"/>
</dbReference>
<dbReference type="PhylomeDB" id="Q14168"/>
<dbReference type="TreeFam" id="TF314263"/>
<dbReference type="PathwayCommons" id="Q14168"/>
<dbReference type="SignaLink" id="Q14168"/>
<dbReference type="BioGRID-ORCS" id="4355">
    <property type="hits" value="22 hits in 1149 CRISPR screens"/>
</dbReference>
<dbReference type="CD-CODE" id="FB4E32DD">
    <property type="entry name" value="Presynaptic clusters and postsynaptic densities"/>
</dbReference>
<dbReference type="ChiTaRS" id="MPP2">
    <property type="organism name" value="human"/>
</dbReference>
<dbReference type="EvolutionaryTrace" id="Q14168"/>
<dbReference type="GeneWiki" id="MPP2"/>
<dbReference type="GenomeRNAi" id="4355"/>
<dbReference type="Pharos" id="Q14168">
    <property type="development level" value="Tbio"/>
</dbReference>
<dbReference type="PRO" id="PR:Q14168"/>
<dbReference type="Proteomes" id="UP000005640">
    <property type="component" value="Chromosome 17"/>
</dbReference>
<dbReference type="RNAct" id="Q14168">
    <property type="molecule type" value="protein"/>
</dbReference>
<dbReference type="Bgee" id="ENSG00000108852">
    <property type="expression patterns" value="Expressed in C1 segment of cervical spinal cord and 149 other cell types or tissues"/>
</dbReference>
<dbReference type="ExpressionAtlas" id="Q14168">
    <property type="expression patterns" value="baseline and differential"/>
</dbReference>
<dbReference type="GO" id="GO:0005911">
    <property type="term" value="C:cell-cell junction"/>
    <property type="evidence" value="ECO:0000318"/>
    <property type="project" value="GO_Central"/>
</dbReference>
<dbReference type="GO" id="GO:0005737">
    <property type="term" value="C:cytoplasm"/>
    <property type="evidence" value="ECO:0007669"/>
    <property type="project" value="UniProtKB-KW"/>
</dbReference>
<dbReference type="GO" id="GO:0005856">
    <property type="term" value="C:cytoskeleton"/>
    <property type="evidence" value="ECO:0000314"/>
    <property type="project" value="UniProtKB"/>
</dbReference>
<dbReference type="GO" id="GO:0032590">
    <property type="term" value="C:dendrite membrane"/>
    <property type="evidence" value="ECO:0000250"/>
    <property type="project" value="UniProtKB"/>
</dbReference>
<dbReference type="GO" id="GO:0043198">
    <property type="term" value="C:dendritic shaft"/>
    <property type="evidence" value="ECO:0000250"/>
    <property type="project" value="UniProtKB"/>
</dbReference>
<dbReference type="GO" id="GO:0043197">
    <property type="term" value="C:dendritic spine"/>
    <property type="evidence" value="ECO:0000250"/>
    <property type="project" value="UniProtKB"/>
</dbReference>
<dbReference type="GO" id="GO:0005886">
    <property type="term" value="C:plasma membrane"/>
    <property type="evidence" value="ECO:0000318"/>
    <property type="project" value="GO_Central"/>
</dbReference>
<dbReference type="GO" id="GO:0014069">
    <property type="term" value="C:postsynaptic density"/>
    <property type="evidence" value="ECO:0000250"/>
    <property type="project" value="UniProtKB"/>
</dbReference>
<dbReference type="GO" id="GO:0060079">
    <property type="term" value="P:excitatory postsynaptic potential"/>
    <property type="evidence" value="ECO:0000250"/>
    <property type="project" value="UniProtKB"/>
</dbReference>
<dbReference type="GO" id="GO:0060291">
    <property type="term" value="P:long-term synaptic potentiation"/>
    <property type="evidence" value="ECO:0000250"/>
    <property type="project" value="UniProtKB"/>
</dbReference>
<dbReference type="GO" id="GO:0051260">
    <property type="term" value="P:protein homooligomerization"/>
    <property type="evidence" value="ECO:0000250"/>
    <property type="project" value="UniProtKB"/>
</dbReference>
<dbReference type="CDD" id="cd00071">
    <property type="entry name" value="GMPK"/>
    <property type="match status" value="1"/>
</dbReference>
<dbReference type="CDD" id="cd10832">
    <property type="entry name" value="PDZ_MPP6-MPP2-like"/>
    <property type="match status" value="1"/>
</dbReference>
<dbReference type="CDD" id="cd12037">
    <property type="entry name" value="SH3_MPP2"/>
    <property type="match status" value="1"/>
</dbReference>
<dbReference type="FunFam" id="3.30.63.10:FF:000002">
    <property type="entry name" value="Guanylate kinase 1"/>
    <property type="match status" value="1"/>
</dbReference>
<dbReference type="FunFam" id="2.30.30.40:FF:000069">
    <property type="entry name" value="MAGUK p55 subfamily member 6"/>
    <property type="match status" value="1"/>
</dbReference>
<dbReference type="FunFam" id="2.30.42.10:FF:000047">
    <property type="entry name" value="MAGUK p55 subfamily member 6"/>
    <property type="match status" value="1"/>
</dbReference>
<dbReference type="FunFam" id="3.40.50.300:FF:000146">
    <property type="entry name" value="MAGUK p55 subfamily member 6 isoform X1"/>
    <property type="match status" value="1"/>
</dbReference>
<dbReference type="Gene3D" id="2.30.42.10">
    <property type="match status" value="1"/>
</dbReference>
<dbReference type="Gene3D" id="1.10.287.650">
    <property type="entry name" value="L27 domain"/>
    <property type="match status" value="1"/>
</dbReference>
<dbReference type="Gene3D" id="3.40.50.300">
    <property type="entry name" value="P-loop containing nucleotide triphosphate hydrolases"/>
    <property type="match status" value="1"/>
</dbReference>
<dbReference type="Gene3D" id="2.30.30.40">
    <property type="entry name" value="SH3 Domains"/>
    <property type="match status" value="1"/>
</dbReference>
<dbReference type="InterPro" id="IPR008145">
    <property type="entry name" value="GK/Ca_channel_bsu"/>
</dbReference>
<dbReference type="InterPro" id="IPR008144">
    <property type="entry name" value="Guanylate_kin-like_dom"/>
</dbReference>
<dbReference type="InterPro" id="IPR020590">
    <property type="entry name" value="Guanylate_kinase_CS"/>
</dbReference>
<dbReference type="InterPro" id="IPR014775">
    <property type="entry name" value="L27_C"/>
</dbReference>
<dbReference type="InterPro" id="IPR004172">
    <property type="entry name" value="L27_dom"/>
</dbReference>
<dbReference type="InterPro" id="IPR036892">
    <property type="entry name" value="L27_dom_sf"/>
</dbReference>
<dbReference type="InterPro" id="IPR050716">
    <property type="entry name" value="MAGUK"/>
</dbReference>
<dbReference type="InterPro" id="IPR035602">
    <property type="entry name" value="MPP2_SH3"/>
</dbReference>
<dbReference type="InterPro" id="IPR027417">
    <property type="entry name" value="P-loop_NTPase"/>
</dbReference>
<dbReference type="InterPro" id="IPR001478">
    <property type="entry name" value="PDZ"/>
</dbReference>
<dbReference type="InterPro" id="IPR036034">
    <property type="entry name" value="PDZ_sf"/>
</dbReference>
<dbReference type="InterPro" id="IPR036028">
    <property type="entry name" value="SH3-like_dom_sf"/>
</dbReference>
<dbReference type="InterPro" id="IPR001452">
    <property type="entry name" value="SH3_domain"/>
</dbReference>
<dbReference type="PANTHER" id="PTHR23122">
    <property type="entry name" value="MEMBRANE-ASSOCIATED GUANYLATE KINASE MAGUK"/>
    <property type="match status" value="1"/>
</dbReference>
<dbReference type="Pfam" id="PF00625">
    <property type="entry name" value="Guanylate_kin"/>
    <property type="match status" value="1"/>
</dbReference>
<dbReference type="Pfam" id="PF02828">
    <property type="entry name" value="L27"/>
    <property type="match status" value="2"/>
</dbReference>
<dbReference type="Pfam" id="PF00595">
    <property type="entry name" value="PDZ"/>
    <property type="match status" value="1"/>
</dbReference>
<dbReference type="Pfam" id="PF07653">
    <property type="entry name" value="SH3_2"/>
    <property type="match status" value="1"/>
</dbReference>
<dbReference type="SMART" id="SM00072">
    <property type="entry name" value="GuKc"/>
    <property type="match status" value="1"/>
</dbReference>
<dbReference type="SMART" id="SM00569">
    <property type="entry name" value="L27"/>
    <property type="match status" value="2"/>
</dbReference>
<dbReference type="SMART" id="SM00228">
    <property type="entry name" value="PDZ"/>
    <property type="match status" value="1"/>
</dbReference>
<dbReference type="SMART" id="SM00326">
    <property type="entry name" value="SH3"/>
    <property type="match status" value="1"/>
</dbReference>
<dbReference type="SUPFAM" id="SSF101288">
    <property type="entry name" value="L27 domain"/>
    <property type="match status" value="1"/>
</dbReference>
<dbReference type="SUPFAM" id="SSF52540">
    <property type="entry name" value="P-loop containing nucleoside triphosphate hydrolases"/>
    <property type="match status" value="1"/>
</dbReference>
<dbReference type="SUPFAM" id="SSF50156">
    <property type="entry name" value="PDZ domain-like"/>
    <property type="match status" value="1"/>
</dbReference>
<dbReference type="SUPFAM" id="SSF50044">
    <property type="entry name" value="SH3-domain"/>
    <property type="match status" value="1"/>
</dbReference>
<dbReference type="PROSITE" id="PS00856">
    <property type="entry name" value="GUANYLATE_KINASE_1"/>
    <property type="match status" value="1"/>
</dbReference>
<dbReference type="PROSITE" id="PS50052">
    <property type="entry name" value="GUANYLATE_KINASE_2"/>
    <property type="match status" value="1"/>
</dbReference>
<dbReference type="PROSITE" id="PS51022">
    <property type="entry name" value="L27"/>
    <property type="match status" value="2"/>
</dbReference>
<dbReference type="PROSITE" id="PS50106">
    <property type="entry name" value="PDZ"/>
    <property type="match status" value="1"/>
</dbReference>
<dbReference type="PROSITE" id="PS50002">
    <property type="entry name" value="SH3"/>
    <property type="match status" value="1"/>
</dbReference>
<protein>
    <recommendedName>
        <fullName>MAGUK p55 subfamily member 2</fullName>
    </recommendedName>
    <alternativeName>
        <fullName>Discs large homolog 2</fullName>
    </alternativeName>
    <alternativeName>
        <fullName>Protein MPP2</fullName>
    </alternativeName>
</protein>